<proteinExistence type="evidence at protein level"/>
<sequence length="149" mass="15512">MKAQKGFTLIELMIVVAIIGILAAIAIPQYQNYVARSEGASALATINPLKTTVEESLSRGIAGSKIKIGTTASTATETYVGVEPDANKLGVIAVAIEDSGAGDITFTFQTGTSSPKNATKVITLNRTADGVWACKSTQDPMFTPKGCDN</sequence>
<accession>P04739</accession>
<comment type="function">
    <text evidence="4 5 7 11">Major component of the type IV pilus (T4P) that plays a role in surface and host cell adhesion, colonization, biofilm maturation, virulence, and twitching, a form of surface-associated motility facilitated by cycles of extension, adhesion, and retraction of T4P fibers (PubMed:26041805, PubMed:31431558, PubMed:9282737). In addition, plays a critical role in type II secretion of exoenzymes by interacting with specific components such as XcpT or XcpU (PubMed:9282737). Modulates host calcium signaling through interaction with host calcium-modulating cyclophilin ligand (PubMed:23266901).</text>
</comment>
<comment type="subunit">
    <text evidence="5 6 9 11">Interacts with itself to form a multimeric tubular filament structure with a diameter of 51 Angstroms (PubMed:39666767). Interacts with PilJ (PubMed:26041805). Interacts with PilS at the inner membrane (PubMed:27162347). Interacts with type II secretion system (T2SS) components XcpT, XcpU and XcpW (PubMed:9282737).</text>
</comment>
<comment type="subunit">
    <text evidence="8">(Microbial infection) The ssRNA phage PP7 infects P.aeruginosa O1 (PAO1) through the retractile type IV pilus (T4P). PP7 binds to T4P by interacting with a single pilin subunit PilA through the Pilus-Interacting Region (PIR) of the phage maturation protein (Mat), and is brought to the cell surface through pilus retraction powered by ATPases PilT and PilU. Then Mat enters the cell envelope, causing pilus bending and pilus detachment, which impairs cell motility and restricts the pathogen's virulence.</text>
</comment>
<comment type="subcellular location">
    <subcellularLocation>
        <location evidence="9">Fimbrium</location>
    </subcellularLocation>
    <subcellularLocation>
        <location evidence="6">Cell inner membrane</location>
        <topology evidence="1">Single-pass membrane protein</topology>
    </subcellularLocation>
    <subcellularLocation>
        <location evidence="4">Host endoplasmic reticulum membrane</location>
    </subcellularLocation>
    <text evidence="13">Likely secreted through the outer membrane PilQ secretin channel for surface display.</text>
</comment>
<comment type="domain">
    <text evidence="9">PilA subunits constituting the T4P exhibit a classical pilin fold featuring an extended N-terminal alpha-helix linked to a C-terminal globular beta-sheet-containing domain, which are packed tightly along the pilus. The N-terminal helices constitute the pilus core where they stabilize the tubular assembly via hydrophobic interactions. The alpha-helical core of the pilus is surrounded by the C-terminal globular domain of PilA that coats the outer surface of the pilus, mediating interactions with the surrounding environment.</text>
</comment>
<comment type="PTM">
    <text evidence="3">Methylated by prepilin peptidase PilD at the amino group of the N-terminal phenylalanine once the leader sequence is cleaved.</text>
</comment>
<comment type="disruption phenotype">
    <text evidence="7 11">Mutants show a significant reduction in the efficiency of extracellular protein secretion (PubMed:9282737). They are also defective in twitching motility (PubMed:31431558).</text>
</comment>
<comment type="similarity">
    <text evidence="12">Belongs to the N-Me-Phe pilin family.</text>
</comment>
<reference key="1">
    <citation type="journal article" date="1985" name="J. Bacteriol.">
        <title>Comparative studies of the amino acid and nucleotide sequences of pilin derived from Pseudomonas aeruginosa PAK and PAO.</title>
        <authorList>
            <person name="Sastry P.A."/>
            <person name="Finlay B.B."/>
            <person name="Pasloske B.L."/>
            <person name="Paranchych W."/>
            <person name="Pearlstone J.R."/>
            <person name="Smillie L.B."/>
        </authorList>
    </citation>
    <scope>NUCLEOTIDE SEQUENCE [GENOMIC DNA]</scope>
    <source>
        <strain>PAO</strain>
    </source>
</reference>
<reference key="2">
    <citation type="journal article" date="2000" name="Nature">
        <title>Complete genome sequence of Pseudomonas aeruginosa PAO1, an opportunistic pathogen.</title>
        <authorList>
            <person name="Stover C.K."/>
            <person name="Pham X.-Q.T."/>
            <person name="Erwin A.L."/>
            <person name="Mizoguchi S.D."/>
            <person name="Warrener P."/>
            <person name="Hickey M.J."/>
            <person name="Brinkman F.S.L."/>
            <person name="Hufnagle W.O."/>
            <person name="Kowalik D.J."/>
            <person name="Lagrou M."/>
            <person name="Garber R.L."/>
            <person name="Goltry L."/>
            <person name="Tolentino E."/>
            <person name="Westbrock-Wadman S."/>
            <person name="Yuan Y."/>
            <person name="Brody L.L."/>
            <person name="Coulter S.N."/>
            <person name="Folger K.R."/>
            <person name="Kas A."/>
            <person name="Larbig K."/>
            <person name="Lim R.M."/>
            <person name="Smith K.A."/>
            <person name="Spencer D.H."/>
            <person name="Wong G.K.-S."/>
            <person name="Wu Z."/>
            <person name="Paulsen I.T."/>
            <person name="Reizer J."/>
            <person name="Saier M.H. Jr."/>
            <person name="Hancock R.E.W."/>
            <person name="Lory S."/>
            <person name="Olson M.V."/>
        </authorList>
    </citation>
    <scope>NUCLEOTIDE SEQUENCE [LARGE SCALE GENOMIC DNA]</scope>
    <source>
        <strain>ATCC 15692 / DSM 22644 / CIP 104116 / JCM 14847 / LMG 12228 / 1C / PRS 101 / PAO1</strain>
    </source>
</reference>
<reference key="3">
    <citation type="journal article" date="1993" name="Can. J. Microbiol.">
        <title>Mutations in the fifth-position glutamate in Pseudomonas aeruginosa pilin affect the transmethylation of the N-terminal phenylalanine.</title>
        <authorList>
            <person name="Macdonald D.L."/>
            <person name="Pasloske B.L."/>
            <person name="Paranchych W."/>
        </authorList>
    </citation>
    <scope>METHYLATION AT PHE-7</scope>
    <scope>MUTAGENESIS OF GLU-11</scope>
</reference>
<reference key="4">
    <citation type="journal article" date="1992" name="J. Bacteriol.">
        <title>Kinetics and sequence specificity of processing of prepilin by PilD, the type IV leader peptidase of Pseudomonas aeruginosa.</title>
        <authorList>
            <person name="Strom M.S."/>
            <person name="Lory S."/>
        </authorList>
    </citation>
    <scope>CLEAVAGE BY PILD</scope>
    <scope>MUTAGENESIS OF PHE-7</scope>
</reference>
<reference key="5">
    <citation type="journal article" date="1997" name="Mol. Microbiol.">
        <title>Interactions of the components of the general secretion pathway: role of Pseudomonas aeruginosa type IV pilin subunits in complex formation and extracellular protein secretion.</title>
        <authorList>
            <person name="Lu H.M."/>
            <person name="Motley S.T."/>
            <person name="Lory S."/>
        </authorList>
    </citation>
    <scope>INTERACTION WITH XCPT; XCPU AND XCPW</scope>
    <scope>DISRUPTION PHENOTYPE</scope>
    <scope>FUNCTION</scope>
    <source>
        <strain>PAK</strain>
    </source>
</reference>
<reference key="6">
    <citation type="journal article" date="2013" name="J. Infect. Chemother.">
        <title>Type IV pilus protein PilA of Pseudomonas aeruginosa modulates calcium signaling through binding the calcium-modulating cyclophilin ligand.</title>
        <authorList>
            <person name="Okuda J."/>
            <person name="Hayashi N."/>
            <person name="Arakawa M."/>
            <person name="Minagawa S."/>
            <person name="Gotoh N."/>
        </authorList>
    </citation>
    <scope>FUNCTION</scope>
    <scope>INTERACTION WITH HOST CAMLG</scope>
    <scope>SUBCELLULAR LOCATION</scope>
    <source>
        <strain>ATCC 15692 / DSM 22644 / CIP 104116 / JCM 14847 / LMG 12228 / 1C / PRS 101 / PAO1</strain>
    </source>
</reference>
<reference key="7">
    <citation type="journal article" date="2015" name="Proc. Natl. Acad. Sci. U.S.A.">
        <title>Type IV pili mechanochemically regulate virulence factors in Pseudomonas aeruginosa.</title>
        <authorList>
            <person name="Persat A."/>
            <person name="Inclan Y.F."/>
            <person name="Engel J.N."/>
            <person name="Stone H.A."/>
            <person name="Gitai Z."/>
        </authorList>
    </citation>
    <scope>FUNCTION</scope>
    <scope>INTERACTION WITH PILJ</scope>
</reference>
<reference key="8">
    <citation type="journal article" date="2016" name="Proc. Natl. Acad. Sci. U.S.A.">
        <title>Type IV pilins regulate their own expression via direct intramembrane interactions with the sensor kinase PilS.</title>
        <authorList>
            <person name="Kilmury S.L."/>
            <person name="Burrows L.L."/>
        </authorList>
    </citation>
    <scope>INTERACTION WITH PILS</scope>
    <scope>SUBCELLULAR LOCATION</scope>
</reference>
<reference key="9">
    <citation type="journal article" date="2019" name="MBio">
        <title>Type IV Pili Can Mediate Bacterial Motility within Epithelial Cells.</title>
        <authorList>
            <person name="Nieto V."/>
            <person name="Kroken A.R."/>
            <person name="Grosser M.R."/>
            <person name="Smith B.E."/>
            <person name="Metruccio M.M.E."/>
            <person name="Hagan P."/>
            <person name="Hallsten M.E."/>
            <person name="Evans D.J."/>
            <person name="Fleiszig S.M.J."/>
        </authorList>
    </citation>
    <scope>FUNCTION</scope>
    <scope>DISRUPTION PHENOTYPE</scope>
</reference>
<reference evidence="14 15" key="10">
    <citation type="journal article" date="1995" name="Biochemistry">
        <title>Comparison of NMR solution structures of the receptor binding domains of Pseudomonas aeruginosa pili strains PAO, KB7, and PAK: implications for receptor binding and synthetic vaccine design.</title>
        <authorList>
            <person name="Campbell A.P."/>
            <person name="McInnes C."/>
            <person name="Hodges R.S."/>
            <person name="Sykes B.D."/>
        </authorList>
    </citation>
    <scope>STRUCTURE BY NMR OF 133-149</scope>
    <scope>DISULFIDE BOND</scope>
</reference>
<reference evidence="16 17" key="11">
    <citation type="journal article" date="2024" name="Science">
        <title>Removal of Pseudomonas type IV pili by a small RNA virus.</title>
        <authorList>
            <person name="Thongchol J."/>
            <person name="Yu Z."/>
            <person name="Harb L."/>
            <person name="Lin Y."/>
            <person name="Koch M."/>
            <person name="Theodore M."/>
            <person name="Narsaria U."/>
            <person name="Shaevitz J."/>
            <person name="Gitai Z."/>
            <person name="Wu Y."/>
            <person name="Zhang J."/>
            <person name="Zeng L."/>
        </authorList>
    </citation>
    <scope>STRUCTURE BY ELECTRON MICROSCOPY (3.60 ANGSTROMS) OF 7-149 IN COMPLEX WITH PHAGE PP7 MATURATION PROTEIN</scope>
    <scope>DISULFIDE BOND</scope>
    <scope>INTERACTION WITH PHAGE PP7</scope>
    <scope>MUTAGENESIS OF LYS-65 AND TYR-79</scope>
    <source>
        <strain>ATCC 15692 / DSM 22644 / CIP 104116 / JCM 14847 / LMG 12228 / 1C / PRS 101 / PAO1</strain>
    </source>
</reference>
<reference evidence="18" key="12">
    <citation type="journal article" date="2024" name="PLoS Pathog.">
        <title>Structure of the Pseudomonas aeruginosa PAO1 Type IV pilus.</title>
        <authorList>
            <person name="Ochner H."/>
            <person name="Boehning J."/>
            <person name="Wang Z."/>
            <person name="Tarafder A.K."/>
            <person name="Caspy I."/>
            <person name="Bharat T.A.M."/>
        </authorList>
    </citation>
    <scope>STRUCTURE BY ELECTRON MICROSCOPY (3.17 ANGSTROMS) OF 7-149</scope>
    <scope>DISULFIDE BOND</scope>
    <scope>SUBCELLULAR LOCATION</scope>
    <scope>SUBUNIT</scope>
    <scope>DOMAIN</scope>
    <source>
        <strain>ATCC 15692 / DSM 22644 / CIP 104116 / JCM 14847 / LMG 12228 / 1C / PRS 101 / PAO1</strain>
    </source>
</reference>
<feature type="propeptide" id="PRO_0000024178" description="Leader sequence" evidence="2 3">
    <location>
        <begin position="1"/>
        <end position="6"/>
    </location>
</feature>
<feature type="chain" id="PRO_0000024179" description="Type IV major pilin protein PilA">
    <location>
        <begin position="7"/>
        <end position="149"/>
    </location>
</feature>
<feature type="transmembrane region" description="Helical" evidence="1">
    <location>
        <begin position="7"/>
        <end position="27"/>
    </location>
</feature>
<feature type="modified residue" description="N-methylphenylalanine" evidence="2 10">
    <location>
        <position position="7"/>
    </location>
</feature>
<feature type="disulfide bond" evidence="14 15 16 17 18">
    <location>
        <begin position="134"/>
        <end position="147"/>
    </location>
</feature>
<feature type="mutagenesis site" description="Loss of processing by PilD." evidence="3">
    <original>F</original>
    <variation>C</variation>
    <location>
        <position position="7"/>
    </location>
</feature>
<feature type="mutagenesis site" description="Decrease in methylation of F-7 and loss of pili assembly." evidence="10">
    <original>E</original>
    <variation>A</variation>
    <location>
        <position position="11"/>
    </location>
</feature>
<feature type="mutagenesis site" description="No effect on pilin-pilin interaction because the twitching motility is unaffected, but weaker Mat-pilin interaction and less detached pili during PP7 infection." evidence="8">
    <original>K</original>
    <variation>A</variation>
    <location>
        <position position="65"/>
    </location>
</feature>
<feature type="mutagenesis site" description="No effect on pilin-pilin interaction because the twitching motility is unaffected, but weaker Mat-pilin interaction." evidence="8">
    <original>Y</original>
    <variation>A</variation>
    <location>
        <position position="79"/>
    </location>
</feature>
<feature type="helix" evidence="19">
    <location>
        <begin position="9"/>
        <end position="22"/>
    </location>
</feature>
<feature type="helix" evidence="19">
    <location>
        <begin position="31"/>
        <end position="46"/>
    </location>
</feature>
<feature type="helix" evidence="19">
    <location>
        <begin position="49"/>
        <end position="58"/>
    </location>
</feature>
<feature type="helix" evidence="19">
    <location>
        <begin position="63"/>
        <end position="65"/>
    </location>
</feature>
<feature type="strand" evidence="19">
    <location>
        <begin position="69"/>
        <end position="71"/>
    </location>
</feature>
<feature type="strand" evidence="19">
    <location>
        <begin position="90"/>
        <end position="96"/>
    </location>
</feature>
<feature type="strand" evidence="19">
    <location>
        <begin position="102"/>
        <end position="108"/>
    </location>
</feature>
<feature type="turn" evidence="19">
    <location>
        <begin position="110"/>
        <end position="112"/>
    </location>
</feature>
<feature type="turn" evidence="19">
    <location>
        <begin position="115"/>
        <end position="119"/>
    </location>
</feature>
<feature type="strand" evidence="19">
    <location>
        <begin position="121"/>
        <end position="126"/>
    </location>
</feature>
<feature type="strand" evidence="19">
    <location>
        <begin position="132"/>
        <end position="136"/>
    </location>
</feature>
<feature type="turn" evidence="19">
    <location>
        <begin position="140"/>
        <end position="142"/>
    </location>
</feature>
<protein>
    <recommendedName>
        <fullName>Type IV major pilin protein PilA</fullName>
    </recommendedName>
    <alternativeName>
        <fullName>Pilin</fullName>
    </alternativeName>
</protein>
<keyword id="KW-0002">3D-structure</keyword>
<keyword id="KW-0997">Cell inner membrane</keyword>
<keyword id="KW-1003">Cell membrane</keyword>
<keyword id="KW-1015">Disulfide bond</keyword>
<keyword id="KW-0281">Fimbrium</keyword>
<keyword id="KW-1038">Host endoplasmic reticulum</keyword>
<keyword id="KW-1043">Host membrane</keyword>
<keyword id="KW-0472">Membrane</keyword>
<keyword id="KW-0488">Methylation</keyword>
<keyword id="KW-1185">Reference proteome</keyword>
<keyword id="KW-0812">Transmembrane</keyword>
<keyword id="KW-1133">Transmembrane helix</keyword>
<name>PILA_PSEAE</name>
<gene>
    <name type="primary">pilA</name>
    <name type="synonym">fimA</name>
    <name type="ordered locus">PA4525</name>
</gene>
<dbReference type="EMBL" id="M11323">
    <property type="protein sequence ID" value="AAA25954.1"/>
    <property type="molecule type" value="Genomic_DNA"/>
</dbReference>
<dbReference type="EMBL" id="AE004091">
    <property type="protein sequence ID" value="AAG07913.1"/>
    <property type="molecule type" value="Genomic_DNA"/>
</dbReference>
<dbReference type="PIR" id="A25023">
    <property type="entry name" value="A25023"/>
</dbReference>
<dbReference type="RefSeq" id="NP_253215.1">
    <property type="nucleotide sequence ID" value="NC_002516.2"/>
</dbReference>
<dbReference type="RefSeq" id="WP_003112842.1">
    <property type="nucleotide sequence ID" value="NZ_QZGE01000004.1"/>
</dbReference>
<dbReference type="PDB" id="1PAN">
    <property type="method" value="NMR"/>
    <property type="chains" value="A=133-149"/>
</dbReference>
<dbReference type="PDB" id="1PAO">
    <property type="method" value="NMR"/>
    <property type="chains" value="A=133-149"/>
</dbReference>
<dbReference type="PDB" id="8TUM">
    <property type="method" value="EM"/>
    <property type="resolution" value="3.60 A"/>
    <property type="chains" value="a/b/c/d/e/f/g/h/i/j/k/l/m/n/o/p=7-149"/>
</dbReference>
<dbReference type="PDB" id="8TUW">
    <property type="method" value="EM"/>
    <property type="resolution" value="7.90 A"/>
    <property type="chains" value="a2/b2/c2/d2/e2/f2/g2/h2/i2/j2/k2/l2/m2/n2/o2/p2=7-149"/>
</dbReference>
<dbReference type="PDB" id="9EWX">
    <property type="method" value="EM"/>
    <property type="resolution" value="3.17 A"/>
    <property type="chains" value="A/B/C/D/E/F/G/H/I/J/K/L/M/N/O/P/Q/R/S/T/U/V/W=7-149"/>
</dbReference>
<dbReference type="PDBsum" id="1PAN"/>
<dbReference type="PDBsum" id="1PAO"/>
<dbReference type="PDBsum" id="8TUM"/>
<dbReference type="PDBsum" id="8TUW"/>
<dbReference type="PDBsum" id="9EWX"/>
<dbReference type="EMDB" id="EMD-41625"/>
<dbReference type="EMDB" id="EMD-41633"/>
<dbReference type="SMR" id="P04739"/>
<dbReference type="STRING" id="208964.PA4525"/>
<dbReference type="TCDB" id="3.A.15.2.1">
    <property type="family name" value="the outer membrane protein secreting main terminal branch (mtb) family"/>
</dbReference>
<dbReference type="iPTMnet" id="P04739"/>
<dbReference type="PaxDb" id="208964-PA4525"/>
<dbReference type="DNASU" id="878423"/>
<dbReference type="GeneID" id="878423"/>
<dbReference type="KEGG" id="pae:PA4525"/>
<dbReference type="PATRIC" id="fig|208964.12.peg.4736"/>
<dbReference type="PseudoCAP" id="PA4525"/>
<dbReference type="HOGENOM" id="CLU_091705_4_2_6"/>
<dbReference type="InParanoid" id="P04739"/>
<dbReference type="OrthoDB" id="115249at2"/>
<dbReference type="PhylomeDB" id="P04739"/>
<dbReference type="BioCyc" id="PAER208964:G1FZ6-4615-MONOMER"/>
<dbReference type="EvolutionaryTrace" id="P04739"/>
<dbReference type="PHI-base" id="PHI:9078"/>
<dbReference type="Proteomes" id="UP000002438">
    <property type="component" value="Chromosome"/>
</dbReference>
<dbReference type="GO" id="GO:0009986">
    <property type="term" value="C:cell surface"/>
    <property type="evidence" value="ECO:0000314"/>
    <property type="project" value="CACAO"/>
</dbReference>
<dbReference type="GO" id="GO:0005829">
    <property type="term" value="C:cytosol"/>
    <property type="evidence" value="ECO:0000314"/>
    <property type="project" value="CACAO"/>
</dbReference>
<dbReference type="GO" id="GO:0044167">
    <property type="term" value="C:host cell endoplasmic reticulum membrane"/>
    <property type="evidence" value="ECO:0007669"/>
    <property type="project" value="UniProtKB-SubCell"/>
</dbReference>
<dbReference type="GO" id="GO:0009289">
    <property type="term" value="C:pilus"/>
    <property type="evidence" value="ECO:0000314"/>
    <property type="project" value="PseudoCAP"/>
</dbReference>
<dbReference type="GO" id="GO:0005886">
    <property type="term" value="C:plasma membrane"/>
    <property type="evidence" value="ECO:0007669"/>
    <property type="project" value="UniProtKB-SubCell"/>
</dbReference>
<dbReference type="GO" id="GO:0044096">
    <property type="term" value="C:type IV pilus"/>
    <property type="evidence" value="ECO:0000314"/>
    <property type="project" value="PseudoCAP"/>
</dbReference>
<dbReference type="GO" id="GO:0043709">
    <property type="term" value="P:cell adhesion involved in single-species biofilm formation"/>
    <property type="evidence" value="ECO:0000315"/>
    <property type="project" value="PseudoCAP"/>
</dbReference>
<dbReference type="GO" id="GO:0050848">
    <property type="term" value="P:regulation of calcium-mediated signaling"/>
    <property type="evidence" value="ECO:0000315"/>
    <property type="project" value="PseudoCAP"/>
</dbReference>
<dbReference type="GO" id="GO:0044011">
    <property type="term" value="P:single-species biofilm formation on inanimate substrate"/>
    <property type="evidence" value="ECO:0000315"/>
    <property type="project" value="PseudoCAP"/>
</dbReference>
<dbReference type="GO" id="GO:0043107">
    <property type="term" value="P:type IV pilus-dependent motility"/>
    <property type="evidence" value="ECO:0000314"/>
    <property type="project" value="PseudoCAP"/>
</dbReference>
<dbReference type="FunFam" id="3.30.700.10:FF:000003">
    <property type="entry name" value="Type IV pilin"/>
    <property type="match status" value="1"/>
</dbReference>
<dbReference type="Gene3D" id="3.30.700.10">
    <property type="entry name" value="Glycoprotein, Type 4 Pilin"/>
    <property type="match status" value="1"/>
</dbReference>
<dbReference type="InterPro" id="IPR012902">
    <property type="entry name" value="N_methyl_site"/>
</dbReference>
<dbReference type="InterPro" id="IPR001082">
    <property type="entry name" value="Pilin"/>
</dbReference>
<dbReference type="InterPro" id="IPR045584">
    <property type="entry name" value="Pilin-like"/>
</dbReference>
<dbReference type="InterPro" id="IPR050470">
    <property type="entry name" value="T4P/T2SS_Core"/>
</dbReference>
<dbReference type="NCBIfam" id="TIGR02532">
    <property type="entry name" value="IV_pilin_GFxxxE"/>
    <property type="match status" value="1"/>
</dbReference>
<dbReference type="PANTHER" id="PTHR30093">
    <property type="entry name" value="GENERAL SECRETION PATHWAY PROTEIN G"/>
    <property type="match status" value="1"/>
</dbReference>
<dbReference type="PANTHER" id="PTHR30093:SF34">
    <property type="entry name" value="PREPILIN PEPTIDASE-DEPENDENT PROTEIN D"/>
    <property type="match status" value="1"/>
</dbReference>
<dbReference type="Pfam" id="PF07963">
    <property type="entry name" value="N_methyl"/>
    <property type="match status" value="1"/>
</dbReference>
<dbReference type="Pfam" id="PF00114">
    <property type="entry name" value="Pilin"/>
    <property type="match status" value="1"/>
</dbReference>
<dbReference type="SUPFAM" id="SSF54523">
    <property type="entry name" value="Pili subunits"/>
    <property type="match status" value="1"/>
</dbReference>
<dbReference type="PROSITE" id="PS00409">
    <property type="entry name" value="PROKAR_NTER_METHYL"/>
    <property type="match status" value="1"/>
</dbReference>
<organism>
    <name type="scientific">Pseudomonas aeruginosa (strain ATCC 15692 / DSM 22644 / CIP 104116 / JCM 14847 / LMG 12228 / 1C / PRS 101 / PAO1)</name>
    <dbReference type="NCBI Taxonomy" id="208964"/>
    <lineage>
        <taxon>Bacteria</taxon>
        <taxon>Pseudomonadati</taxon>
        <taxon>Pseudomonadota</taxon>
        <taxon>Gammaproteobacteria</taxon>
        <taxon>Pseudomonadales</taxon>
        <taxon>Pseudomonadaceae</taxon>
        <taxon>Pseudomonas</taxon>
    </lineage>
</organism>
<evidence type="ECO:0000255" key="1"/>
<evidence type="ECO:0000255" key="2">
    <source>
        <dbReference type="PROSITE-ProRule" id="PRU01070"/>
    </source>
</evidence>
<evidence type="ECO:0000269" key="3">
    <source>
    </source>
</evidence>
<evidence type="ECO:0000269" key="4">
    <source>
    </source>
</evidence>
<evidence type="ECO:0000269" key="5">
    <source>
    </source>
</evidence>
<evidence type="ECO:0000269" key="6">
    <source>
    </source>
</evidence>
<evidence type="ECO:0000269" key="7">
    <source>
    </source>
</evidence>
<evidence type="ECO:0000269" key="8">
    <source>
    </source>
</evidence>
<evidence type="ECO:0000269" key="9">
    <source>
    </source>
</evidence>
<evidence type="ECO:0000269" key="10">
    <source>
    </source>
</evidence>
<evidence type="ECO:0000269" key="11">
    <source>
    </source>
</evidence>
<evidence type="ECO:0000305" key="12"/>
<evidence type="ECO:0000305" key="13">
    <source>
    </source>
</evidence>
<evidence type="ECO:0007744" key="14">
    <source>
        <dbReference type="PDB" id="1PAN"/>
    </source>
</evidence>
<evidence type="ECO:0007744" key="15">
    <source>
        <dbReference type="PDB" id="1PAO"/>
    </source>
</evidence>
<evidence type="ECO:0007744" key="16">
    <source>
        <dbReference type="PDB" id="8TUM"/>
    </source>
</evidence>
<evidence type="ECO:0007744" key="17">
    <source>
        <dbReference type="PDB" id="8TUW"/>
    </source>
</evidence>
<evidence type="ECO:0007744" key="18">
    <source>
        <dbReference type="PDB" id="9EWX"/>
    </source>
</evidence>
<evidence type="ECO:0007829" key="19">
    <source>
        <dbReference type="PDB" id="9EWX"/>
    </source>
</evidence>